<evidence type="ECO:0000255" key="1">
    <source>
        <dbReference type="HAMAP-Rule" id="MF_02060"/>
    </source>
</evidence>
<name>TRMH_BORBU</name>
<protein>
    <recommendedName>
        <fullName evidence="1">tRNA (guanosine(18)-2'-O)-methyltransferase</fullName>
        <ecNumber evidence="1">2.1.1.34</ecNumber>
    </recommendedName>
    <alternativeName>
        <fullName evidence="1">tRNA [Gm18] methyltransferase</fullName>
    </alternativeName>
</protein>
<reference key="1">
    <citation type="journal article" date="1997" name="Nature">
        <title>Genomic sequence of a Lyme disease spirochaete, Borrelia burgdorferi.</title>
        <authorList>
            <person name="Fraser C.M."/>
            <person name="Casjens S."/>
            <person name="Huang W.M."/>
            <person name="Sutton G.G."/>
            <person name="Clayton R.A."/>
            <person name="Lathigra R."/>
            <person name="White O."/>
            <person name="Ketchum K.A."/>
            <person name="Dodson R.J."/>
            <person name="Hickey E.K."/>
            <person name="Gwinn M.L."/>
            <person name="Dougherty B.A."/>
            <person name="Tomb J.-F."/>
            <person name="Fleischmann R.D."/>
            <person name="Richardson D.L."/>
            <person name="Peterson J.D."/>
            <person name="Kerlavage A.R."/>
            <person name="Quackenbush J."/>
            <person name="Salzberg S.L."/>
            <person name="Hanson M."/>
            <person name="van Vugt R."/>
            <person name="Palmer N."/>
            <person name="Adams M.D."/>
            <person name="Gocayne J.D."/>
            <person name="Weidman J.F."/>
            <person name="Utterback T.R."/>
            <person name="Watthey L."/>
            <person name="McDonald L.A."/>
            <person name="Artiach P."/>
            <person name="Bowman C."/>
            <person name="Garland S.A."/>
            <person name="Fujii C."/>
            <person name="Cotton M.D."/>
            <person name="Horst K."/>
            <person name="Roberts K.M."/>
            <person name="Hatch B."/>
            <person name="Smith H.O."/>
            <person name="Venter J.C."/>
        </authorList>
    </citation>
    <scope>NUCLEOTIDE SEQUENCE [LARGE SCALE GENOMIC DNA]</scope>
    <source>
        <strain>ATCC 35210 / DSM 4680 / CIP 102532 / B31</strain>
    </source>
</reference>
<keyword id="KW-0489">Methyltransferase</keyword>
<keyword id="KW-1185">Reference proteome</keyword>
<keyword id="KW-0694">RNA-binding</keyword>
<keyword id="KW-0949">S-adenosyl-L-methionine</keyword>
<keyword id="KW-0808">Transferase</keyword>
<keyword id="KW-0819">tRNA processing</keyword>
<keyword id="KW-0820">tRNA-binding</keyword>
<dbReference type="EC" id="2.1.1.34" evidence="1"/>
<dbReference type="EMBL" id="AE000783">
    <property type="protein sequence ID" value="AAC66431.1"/>
    <property type="molecule type" value="Genomic_DNA"/>
</dbReference>
<dbReference type="PIR" id="D70106">
    <property type="entry name" value="D70106"/>
</dbReference>
<dbReference type="RefSeq" id="NP_212186.1">
    <property type="nucleotide sequence ID" value="NC_001318.1"/>
</dbReference>
<dbReference type="RefSeq" id="WP_002658321.1">
    <property type="nucleotide sequence ID" value="NC_001318.1"/>
</dbReference>
<dbReference type="SMR" id="O51081"/>
<dbReference type="STRING" id="224326.BB_0052"/>
<dbReference type="PaxDb" id="224326-BB_0052"/>
<dbReference type="EnsemblBacteria" id="AAC66431">
    <property type="protein sequence ID" value="AAC66431"/>
    <property type="gene ID" value="BB_0052"/>
</dbReference>
<dbReference type="KEGG" id="bbu:BB_0052"/>
<dbReference type="PATRIC" id="fig|224326.49.peg.450"/>
<dbReference type="HOGENOM" id="CLU_021322_4_1_12"/>
<dbReference type="OrthoDB" id="9794400at2"/>
<dbReference type="Proteomes" id="UP000001807">
    <property type="component" value="Chromosome"/>
</dbReference>
<dbReference type="GO" id="GO:0141100">
    <property type="term" value="F:tRNA (guanine(18)-2'-O)-methyltransferase activity"/>
    <property type="evidence" value="ECO:0007669"/>
    <property type="project" value="UniProtKB-UniRule"/>
</dbReference>
<dbReference type="GO" id="GO:0000049">
    <property type="term" value="F:tRNA binding"/>
    <property type="evidence" value="ECO:0007669"/>
    <property type="project" value="UniProtKB-UniRule"/>
</dbReference>
<dbReference type="GO" id="GO:0002938">
    <property type="term" value="P:tRNA guanine ribose methylation"/>
    <property type="evidence" value="ECO:0007669"/>
    <property type="project" value="UniProtKB-UniRule"/>
</dbReference>
<dbReference type="CDD" id="cd18092">
    <property type="entry name" value="SpoU-like_TrmH"/>
    <property type="match status" value="1"/>
</dbReference>
<dbReference type="Gene3D" id="3.40.1280.10">
    <property type="match status" value="1"/>
</dbReference>
<dbReference type="HAMAP" id="MF_02060">
    <property type="entry name" value="tRNA_methyltr_TrmH"/>
    <property type="match status" value="1"/>
</dbReference>
<dbReference type="InterPro" id="IPR029028">
    <property type="entry name" value="Alpha/beta_knot_MTases"/>
</dbReference>
<dbReference type="InterPro" id="IPR001537">
    <property type="entry name" value="SpoU_MeTrfase"/>
</dbReference>
<dbReference type="InterPro" id="IPR033671">
    <property type="entry name" value="TrmH"/>
</dbReference>
<dbReference type="InterPro" id="IPR029026">
    <property type="entry name" value="tRNA_m1G_MTases_N"/>
</dbReference>
<dbReference type="PANTHER" id="PTHR43453">
    <property type="entry name" value="RRNA METHYLASE-LIKE"/>
    <property type="match status" value="1"/>
</dbReference>
<dbReference type="PANTHER" id="PTHR43453:SF1">
    <property type="entry name" value="TRNA_RRNA METHYLTRANSFERASE SPOU TYPE DOMAIN-CONTAINING PROTEIN"/>
    <property type="match status" value="1"/>
</dbReference>
<dbReference type="Pfam" id="PF00588">
    <property type="entry name" value="SpoU_methylase"/>
    <property type="match status" value="1"/>
</dbReference>
<dbReference type="SUPFAM" id="SSF75217">
    <property type="entry name" value="alpha/beta knot"/>
    <property type="match status" value="1"/>
</dbReference>
<feature type="chain" id="PRO_0000159822" description="tRNA (guanosine(18)-2'-O)-methyltransferase">
    <location>
        <begin position="1"/>
        <end position="218"/>
    </location>
</feature>
<feature type="binding site" evidence="1">
    <location>
        <position position="111"/>
    </location>
    <ligand>
        <name>S-adenosyl-L-methionine</name>
        <dbReference type="ChEBI" id="CHEBI:59789"/>
    </ligand>
</feature>
<feature type="binding site" evidence="1">
    <location>
        <position position="154"/>
    </location>
    <ligand>
        <name>S-adenosyl-L-methionine</name>
        <dbReference type="ChEBI" id="CHEBI:59789"/>
    </ligand>
</feature>
<gene>
    <name evidence="1" type="primary">trmH</name>
    <name type="ordered locus">BB_0052</name>
</gene>
<accession>O51081</accession>
<organism>
    <name type="scientific">Borreliella burgdorferi (strain ATCC 35210 / DSM 4680 / CIP 102532 / B31)</name>
    <name type="common">Borrelia burgdorferi</name>
    <dbReference type="NCBI Taxonomy" id="224326"/>
    <lineage>
        <taxon>Bacteria</taxon>
        <taxon>Pseudomonadati</taxon>
        <taxon>Spirochaetota</taxon>
        <taxon>Spirochaetia</taxon>
        <taxon>Spirochaetales</taxon>
        <taxon>Borreliaceae</taxon>
        <taxon>Borreliella</taxon>
    </lineage>
</organism>
<sequence>MDDDVLKRIGVLSKFITDEKKARIEKVLNLRTNYLTFVLEDIFQSQNASATIRTGEILGLSDVHVIEKKNKHTLNPDVTLGSSQWINLNKYKNAKFAIDRLKSDGYSIVATSLNPKSINLENLTINNKMAIFFGTELTGLSAEVLGAADLYVKIPMYGFTQSYNISVAVAIVMYSLLMRLRKSSIDYLLNEAEKSNLRLKYYRQVVKNYQFIENLINS</sequence>
<proteinExistence type="inferred from homology"/>
<comment type="function">
    <text evidence="1">Catalyzes the 2'-O methylation of guanosine at position 18 in tRNA.</text>
</comment>
<comment type="catalytic activity">
    <reaction evidence="1">
        <text>guanosine(18) in tRNA + S-adenosyl-L-methionine = 2'-O-methylguanosine(18) in tRNA + S-adenosyl-L-homocysteine + H(+)</text>
        <dbReference type="Rhea" id="RHEA:20077"/>
        <dbReference type="Rhea" id="RHEA-COMP:10190"/>
        <dbReference type="Rhea" id="RHEA-COMP:10192"/>
        <dbReference type="ChEBI" id="CHEBI:15378"/>
        <dbReference type="ChEBI" id="CHEBI:57856"/>
        <dbReference type="ChEBI" id="CHEBI:59789"/>
        <dbReference type="ChEBI" id="CHEBI:74269"/>
        <dbReference type="ChEBI" id="CHEBI:74445"/>
        <dbReference type="EC" id="2.1.1.34"/>
    </reaction>
</comment>
<comment type="similarity">
    <text evidence="1">Belongs to the class IV-like SAM-binding methyltransferase superfamily. RNA methyltransferase TrmH family.</text>
</comment>